<comment type="function">
    <text evidence="2 5">Involved in pristinamycin I biosynthesis (PubMed:9044253). Probably catalyzes the formation of 3-(4-aminophenyl)pyruvate from 4-amino-4-deoxyprephenate (Probable).</text>
</comment>
<comment type="catalytic activity">
    <reaction evidence="5">
        <text>4-amino-4-deoxyprephenate + NAD(+) = 3-(4-aminophenyl)pyruvate + CO2 + NADH + H(+)</text>
        <dbReference type="Rhea" id="RHEA:59380"/>
        <dbReference type="ChEBI" id="CHEBI:15378"/>
        <dbReference type="ChEBI" id="CHEBI:16526"/>
        <dbReference type="ChEBI" id="CHEBI:57540"/>
        <dbReference type="ChEBI" id="CHEBI:57945"/>
        <dbReference type="ChEBI" id="CHEBI:143070"/>
        <dbReference type="ChEBI" id="CHEBI:143071"/>
        <dbReference type="EC" id="1.3.1.121"/>
    </reaction>
    <physiologicalReaction direction="left-to-right" evidence="5">
        <dbReference type="Rhea" id="RHEA:59381"/>
    </physiologicalReaction>
</comment>
<comment type="pathway">
    <text evidence="2">Antibiotic biosynthesis.</text>
</comment>
<comment type="similarity">
    <text evidence="4">Belongs to the prephenate/arogenate dehydrogenase family.</text>
</comment>
<reference key="1">
    <citation type="journal article" date="1997" name="Mol. Microbiol.">
        <title>Identification and analysis of genes from Streptomyces pristinaespiralis encoding enzymes involved in the biosynthesis of the 4-dimethylamino-L-phenylalanine precursor of pristinamycin I.</title>
        <authorList>
            <person name="Blanc V."/>
            <person name="Gil P."/>
            <person name="Bamas-Jacques N."/>
            <person name="Lorenzon S."/>
            <person name="Zagorec M."/>
            <person name="Schleuniger J."/>
            <person name="Bisch D."/>
            <person name="Blanche F."/>
            <person name="Debussche L."/>
            <person name="Crouzet J."/>
            <person name="Thibaut D."/>
        </authorList>
    </citation>
    <scope>NUCLEOTIDE SEQUENCE [GENOMIC DNA]</scope>
    <scope>FUNCTION</scope>
    <scope>PATHWAY</scope>
    <source>
        <strain>SP92</strain>
    </source>
</reference>
<reference key="2">
    <citation type="journal article" date="2011" name="Microb. Biotechnol.">
        <title>Characterization of the 'pristinamycin supercluster' of Streptomyces pristinaespiralis.</title>
        <authorList>
            <person name="Mast Y."/>
            <person name="Weber T."/>
            <person name="Golz M."/>
            <person name="Ort-Winklbauer R."/>
            <person name="Gondran A."/>
            <person name="Wohlleben W."/>
            <person name="Schinko E."/>
        </authorList>
    </citation>
    <scope>NUCLEOTIDE SEQUENCE [GENOMIC RNA]</scope>
    <source>
        <strain>Pr11</strain>
    </source>
</reference>
<reference key="3">
    <citation type="submission" date="2015-08" db="EMBL/GenBank/DDBJ databases">
        <title>Genome sequence of the pristinamycin over-producing bacterium Streptomyces pristinaespiralis HCCB10218.</title>
        <authorList>
            <person name="Tian J."/>
            <person name="Yang J."/>
            <person name="Li L."/>
            <person name="Ruan L."/>
            <person name="Wei W."/>
            <person name="Zheng G."/>
            <person name="Wei Z."/>
            <person name="Yang S."/>
            <person name="Ge M."/>
            <person name="Jiang W."/>
            <person name="Lu Y."/>
        </authorList>
    </citation>
    <scope>NUCLEOTIDE SEQUENCE [LARGE SCALE GENOMIC DNA]</scope>
    <source>
        <strain>HCCB 10218</strain>
    </source>
</reference>
<name>PAPC_STRPR</name>
<sequence>MRGGSVFGRCVVVGGAGAVGRMFSHWLVRSGVAVTWLDVAGAGAADGVRVVAGDVRRPGPEAVAALAAADVVVLAVPEPVAWEAVEVLAGVMRPGAVLADTLSVKSRIAGRLREAAPGLQAVGLNPMFAPSLGLQGRPVAAVVVTDGPGVRALVELVAGWGARVVEMPARRHDELTAAQQAATHAAVLAFGLGLGELSVDVGALRDSAPPPHLAMLALLARIAGGTPEVYFDIQAANPGAPAARQALGRGLVRLGQAVERGDEETFAALFAELRGVLGEHGAELERLCARMFTALH</sequence>
<gene>
    <name evidence="3" type="primary">papC</name>
    <name evidence="6" type="ORF">SPRI_0305</name>
    <name evidence="7" type="ORF">SPRI_7048</name>
</gene>
<protein>
    <recommendedName>
        <fullName>4-amino-4-deoxyprephenate dehydrogenase</fullName>
        <ecNumber evidence="5">1.3.1.121</ecNumber>
    </recommendedName>
</protein>
<keyword id="KW-0045">Antibiotic biosynthesis</keyword>
<keyword id="KW-0560">Oxidoreductase</keyword>
<dbReference type="EC" id="1.3.1.121" evidence="5"/>
<dbReference type="EMBL" id="U60417">
    <property type="protein sequence ID" value="AAC44867.1"/>
    <property type="molecule type" value="Genomic_DNA"/>
</dbReference>
<dbReference type="EMBL" id="FR682001">
    <property type="protein sequence ID" value="CBW45754.1"/>
    <property type="molecule type" value="Genomic_DNA"/>
</dbReference>
<dbReference type="EMBL" id="CP011340">
    <property type="protein sequence ID" value="ALC18611.1"/>
    <property type="molecule type" value="Genomic_DNA"/>
</dbReference>
<dbReference type="EMBL" id="CP011340">
    <property type="protein sequence ID" value="ALC25354.1"/>
    <property type="molecule type" value="Genomic_DNA"/>
</dbReference>
<dbReference type="SMR" id="P72540"/>
<dbReference type="STRING" id="38300.SPRI_0305"/>
<dbReference type="KEGG" id="spri:SPRI_0305"/>
<dbReference type="KEGG" id="spri:SPRI_7048"/>
<dbReference type="PATRIC" id="fig|38300.4.peg.320"/>
<dbReference type="OrthoDB" id="4149052at2"/>
<dbReference type="Proteomes" id="UP000060513">
    <property type="component" value="Chromosome"/>
</dbReference>
<dbReference type="GO" id="GO:0070403">
    <property type="term" value="F:NAD+ binding"/>
    <property type="evidence" value="ECO:0007669"/>
    <property type="project" value="InterPro"/>
</dbReference>
<dbReference type="GO" id="GO:0008977">
    <property type="term" value="F:prephenate dehydrogenase (NAD+) activity"/>
    <property type="evidence" value="ECO:0007669"/>
    <property type="project" value="UniProtKB-EC"/>
</dbReference>
<dbReference type="GO" id="GO:0004665">
    <property type="term" value="F:prephenate dehydrogenase (NADP+) activity"/>
    <property type="evidence" value="ECO:0007669"/>
    <property type="project" value="InterPro"/>
</dbReference>
<dbReference type="GO" id="GO:0017000">
    <property type="term" value="P:antibiotic biosynthetic process"/>
    <property type="evidence" value="ECO:0007669"/>
    <property type="project" value="UniProtKB-KW"/>
</dbReference>
<dbReference type="GO" id="GO:0006571">
    <property type="term" value="P:tyrosine biosynthetic process"/>
    <property type="evidence" value="ECO:0007669"/>
    <property type="project" value="InterPro"/>
</dbReference>
<dbReference type="Gene3D" id="1.10.3660.10">
    <property type="entry name" value="6-phosphogluconate dehydrogenase C-terminal like domain"/>
    <property type="match status" value="1"/>
</dbReference>
<dbReference type="Gene3D" id="3.40.50.720">
    <property type="entry name" value="NAD(P)-binding Rossmann-like Domain"/>
    <property type="match status" value="1"/>
</dbReference>
<dbReference type="InterPro" id="IPR008927">
    <property type="entry name" value="6-PGluconate_DH-like_C_sf"/>
</dbReference>
<dbReference type="InterPro" id="IPR036291">
    <property type="entry name" value="NAD(P)-bd_dom_sf"/>
</dbReference>
<dbReference type="InterPro" id="IPR046825">
    <property type="entry name" value="PDH_C"/>
</dbReference>
<dbReference type="InterPro" id="IPR046826">
    <property type="entry name" value="PDH_N"/>
</dbReference>
<dbReference type="InterPro" id="IPR050812">
    <property type="entry name" value="Preph/Arog_dehydrog"/>
</dbReference>
<dbReference type="InterPro" id="IPR003099">
    <property type="entry name" value="Prephen_DH"/>
</dbReference>
<dbReference type="PANTHER" id="PTHR21363">
    <property type="entry name" value="PREPHENATE DEHYDROGENASE"/>
    <property type="match status" value="1"/>
</dbReference>
<dbReference type="PANTHER" id="PTHR21363:SF0">
    <property type="entry name" value="PREPHENATE DEHYDROGENASE [NADP(+)]"/>
    <property type="match status" value="1"/>
</dbReference>
<dbReference type="Pfam" id="PF20463">
    <property type="entry name" value="PDH_C"/>
    <property type="match status" value="1"/>
</dbReference>
<dbReference type="Pfam" id="PF02153">
    <property type="entry name" value="PDH_N"/>
    <property type="match status" value="1"/>
</dbReference>
<dbReference type="SUPFAM" id="SSF48179">
    <property type="entry name" value="6-phosphogluconate dehydrogenase C-terminal domain-like"/>
    <property type="match status" value="1"/>
</dbReference>
<dbReference type="SUPFAM" id="SSF51735">
    <property type="entry name" value="NAD(P)-binding Rossmann-fold domains"/>
    <property type="match status" value="1"/>
</dbReference>
<dbReference type="PROSITE" id="PS51176">
    <property type="entry name" value="PDH_ADH"/>
    <property type="match status" value="1"/>
</dbReference>
<proteinExistence type="inferred from homology"/>
<accession>P72540</accession>
<organism>
    <name type="scientific">Streptomyces pristinaespiralis</name>
    <dbReference type="NCBI Taxonomy" id="38300"/>
    <lineage>
        <taxon>Bacteria</taxon>
        <taxon>Bacillati</taxon>
        <taxon>Actinomycetota</taxon>
        <taxon>Actinomycetes</taxon>
        <taxon>Kitasatosporales</taxon>
        <taxon>Streptomycetaceae</taxon>
        <taxon>Streptomyces</taxon>
    </lineage>
</organism>
<evidence type="ECO:0000255" key="1">
    <source>
        <dbReference type="PROSITE-ProRule" id="PRU00522"/>
    </source>
</evidence>
<evidence type="ECO:0000269" key="2">
    <source>
    </source>
</evidence>
<evidence type="ECO:0000303" key="3">
    <source>
    </source>
</evidence>
<evidence type="ECO:0000305" key="4"/>
<evidence type="ECO:0000305" key="5">
    <source>
    </source>
</evidence>
<evidence type="ECO:0000312" key="6">
    <source>
        <dbReference type="EMBL" id="ALC18611.1"/>
    </source>
</evidence>
<evidence type="ECO:0000312" key="7">
    <source>
        <dbReference type="EMBL" id="ALC25354.1"/>
    </source>
</evidence>
<feature type="chain" id="PRO_0000453961" description="4-amino-4-deoxyprephenate dehydrogenase">
    <location>
        <begin position="1"/>
        <end position="296"/>
    </location>
</feature>
<feature type="domain" description="Prephenate/arogenate dehydrogenase" evidence="1">
    <location>
        <begin position="9"/>
        <end position="288"/>
    </location>
</feature>